<name>TUSC_YERE8</name>
<proteinExistence type="inferred from homology"/>
<reference key="1">
    <citation type="journal article" date="2006" name="PLoS Genet.">
        <title>The complete genome sequence and comparative genome analysis of the high pathogenicity Yersinia enterocolitica strain 8081.</title>
        <authorList>
            <person name="Thomson N.R."/>
            <person name="Howard S."/>
            <person name="Wren B.W."/>
            <person name="Holden M.T.G."/>
            <person name="Crossman L."/>
            <person name="Challis G.L."/>
            <person name="Churcher C."/>
            <person name="Mungall K."/>
            <person name="Brooks K."/>
            <person name="Chillingworth T."/>
            <person name="Feltwell T."/>
            <person name="Abdellah Z."/>
            <person name="Hauser H."/>
            <person name="Jagels K."/>
            <person name="Maddison M."/>
            <person name="Moule S."/>
            <person name="Sanders M."/>
            <person name="Whitehead S."/>
            <person name="Quail M.A."/>
            <person name="Dougan G."/>
            <person name="Parkhill J."/>
            <person name="Prentice M.B."/>
        </authorList>
    </citation>
    <scope>NUCLEOTIDE SEQUENCE [LARGE SCALE GENOMIC DNA]</scope>
    <source>
        <strain>NCTC 13174 / 8081</strain>
    </source>
</reference>
<comment type="function">
    <text evidence="1">Part of a sulfur-relay system required for 2-thiolation of 5-methylaminomethyl-2-thiouridine (mnm(5)s(2)U) at tRNA wobble positions.</text>
</comment>
<comment type="subunit">
    <text evidence="1">Heterohexamer, formed by a dimer of trimers. The hexameric TusBCD complex contains 2 copies each of TusB, TusC and TusD. The TusBCD complex interacts with TusE.</text>
</comment>
<comment type="subcellular location">
    <subcellularLocation>
        <location evidence="1">Cytoplasm</location>
    </subcellularLocation>
</comment>
<comment type="similarity">
    <text evidence="1">Belongs to the DsrF/TusC family.</text>
</comment>
<sequence>MAMKCVAFVFTQGPHGNAAGREGLDALLATSALSENLGVFFLSDGVLQLLPQQQPEKILARNYIATFGVLPLYDVENFYICEDSLQQRGLSEVTDWILDVEVLSPVNLRRQLANYDVVLTF</sequence>
<protein>
    <recommendedName>
        <fullName evidence="1">Protein TusC</fullName>
    </recommendedName>
    <alternativeName>
        <fullName evidence="1">tRNA 2-thiouridine synthesizing protein C</fullName>
    </alternativeName>
</protein>
<evidence type="ECO:0000255" key="1">
    <source>
        <dbReference type="HAMAP-Rule" id="MF_00389"/>
    </source>
</evidence>
<keyword id="KW-0963">Cytoplasm</keyword>
<keyword id="KW-0819">tRNA processing</keyword>
<accession>A1JS59</accession>
<gene>
    <name evidence="1" type="primary">tusC</name>
    <name type="ordered locus">YE3932</name>
</gene>
<dbReference type="EMBL" id="AM286415">
    <property type="protein sequence ID" value="CAL13951.1"/>
    <property type="molecule type" value="Genomic_DNA"/>
</dbReference>
<dbReference type="RefSeq" id="WP_011817321.1">
    <property type="nucleotide sequence ID" value="NC_008800.1"/>
</dbReference>
<dbReference type="RefSeq" id="YP_001008077.1">
    <property type="nucleotide sequence ID" value="NC_008800.1"/>
</dbReference>
<dbReference type="SMR" id="A1JS59"/>
<dbReference type="KEGG" id="yen:YE3932"/>
<dbReference type="PATRIC" id="fig|393305.7.peg.4182"/>
<dbReference type="eggNOG" id="COG2923">
    <property type="taxonomic scope" value="Bacteria"/>
</dbReference>
<dbReference type="HOGENOM" id="CLU_155943_1_0_6"/>
<dbReference type="OrthoDB" id="9789418at2"/>
<dbReference type="Proteomes" id="UP000000642">
    <property type="component" value="Chromosome"/>
</dbReference>
<dbReference type="GO" id="GO:0005737">
    <property type="term" value="C:cytoplasm"/>
    <property type="evidence" value="ECO:0007669"/>
    <property type="project" value="UniProtKB-SubCell"/>
</dbReference>
<dbReference type="GO" id="GO:0008033">
    <property type="term" value="P:tRNA processing"/>
    <property type="evidence" value="ECO:0007669"/>
    <property type="project" value="UniProtKB-UniRule"/>
</dbReference>
<dbReference type="Gene3D" id="3.40.1260.10">
    <property type="entry name" value="DsrEFH-like"/>
    <property type="match status" value="1"/>
</dbReference>
<dbReference type="HAMAP" id="MF_00389">
    <property type="entry name" value="Thiourid_synth_C"/>
    <property type="match status" value="1"/>
</dbReference>
<dbReference type="InterPro" id="IPR027396">
    <property type="entry name" value="DsrEFH-like"/>
</dbReference>
<dbReference type="InterPro" id="IPR003787">
    <property type="entry name" value="Sulphur_relay_DsrE/F-like"/>
</dbReference>
<dbReference type="InterPro" id="IPR037450">
    <property type="entry name" value="Sulphur_relay_TusC"/>
</dbReference>
<dbReference type="InterPro" id="IPR017462">
    <property type="entry name" value="Sulphur_relay_TusC/DsrF"/>
</dbReference>
<dbReference type="NCBIfam" id="NF001238">
    <property type="entry name" value="PRK00211.1"/>
    <property type="match status" value="1"/>
</dbReference>
<dbReference type="NCBIfam" id="TIGR03010">
    <property type="entry name" value="sulf_tusC_dsrF"/>
    <property type="match status" value="1"/>
</dbReference>
<dbReference type="PANTHER" id="PTHR38780">
    <property type="entry name" value="PROTEIN TUSC"/>
    <property type="match status" value="1"/>
</dbReference>
<dbReference type="PANTHER" id="PTHR38780:SF1">
    <property type="entry name" value="PROTEIN TUSC"/>
    <property type="match status" value="1"/>
</dbReference>
<dbReference type="Pfam" id="PF02635">
    <property type="entry name" value="DsrE"/>
    <property type="match status" value="1"/>
</dbReference>
<dbReference type="SUPFAM" id="SSF75169">
    <property type="entry name" value="DsrEFH-like"/>
    <property type="match status" value="1"/>
</dbReference>
<feature type="chain" id="PRO_1000013246" description="Protein TusC">
    <location>
        <begin position="1"/>
        <end position="121"/>
    </location>
</feature>
<organism>
    <name type="scientific">Yersinia enterocolitica serotype O:8 / biotype 1B (strain NCTC 13174 / 8081)</name>
    <dbReference type="NCBI Taxonomy" id="393305"/>
    <lineage>
        <taxon>Bacteria</taxon>
        <taxon>Pseudomonadati</taxon>
        <taxon>Pseudomonadota</taxon>
        <taxon>Gammaproteobacteria</taxon>
        <taxon>Enterobacterales</taxon>
        <taxon>Yersiniaceae</taxon>
        <taxon>Yersinia</taxon>
    </lineage>
</organism>